<reference key="1">
    <citation type="journal article" date="2006" name="Nat. Biotechnol.">
        <title>Complete genome sequence of the entomopathogenic and metabolically versatile soil bacterium Pseudomonas entomophila.</title>
        <authorList>
            <person name="Vodovar N."/>
            <person name="Vallenet D."/>
            <person name="Cruveiller S."/>
            <person name="Rouy Z."/>
            <person name="Barbe V."/>
            <person name="Acosta C."/>
            <person name="Cattolico L."/>
            <person name="Jubin C."/>
            <person name="Lajus A."/>
            <person name="Segurens B."/>
            <person name="Vacherie B."/>
            <person name="Wincker P."/>
            <person name="Weissenbach J."/>
            <person name="Lemaitre B."/>
            <person name="Medigue C."/>
            <person name="Boccard F."/>
        </authorList>
    </citation>
    <scope>NUCLEOTIDE SEQUENCE [LARGE SCALE GENOMIC DNA]</scope>
    <source>
        <strain>L48</strain>
    </source>
</reference>
<proteinExistence type="inferred from homology"/>
<organism>
    <name type="scientific">Pseudomonas entomophila (strain L48)</name>
    <dbReference type="NCBI Taxonomy" id="384676"/>
    <lineage>
        <taxon>Bacteria</taxon>
        <taxon>Pseudomonadati</taxon>
        <taxon>Pseudomonadota</taxon>
        <taxon>Gammaproteobacteria</taxon>
        <taxon>Pseudomonadales</taxon>
        <taxon>Pseudomonadaceae</taxon>
        <taxon>Pseudomonas</taxon>
    </lineage>
</organism>
<comment type="function">
    <text evidence="1">Involved in the biosynthesis of the osmoprotectant glycine betaine. Catalyzes the oxidation of choline to betaine aldehyde and betaine aldehyde to glycine betaine at the same rate.</text>
</comment>
<comment type="catalytic activity">
    <reaction evidence="1">
        <text>choline + A = betaine aldehyde + AH2</text>
        <dbReference type="Rhea" id="RHEA:17433"/>
        <dbReference type="ChEBI" id="CHEBI:13193"/>
        <dbReference type="ChEBI" id="CHEBI:15354"/>
        <dbReference type="ChEBI" id="CHEBI:15710"/>
        <dbReference type="ChEBI" id="CHEBI:17499"/>
        <dbReference type="EC" id="1.1.99.1"/>
    </reaction>
</comment>
<comment type="catalytic activity">
    <reaction evidence="1">
        <text>betaine aldehyde + NAD(+) + H2O = glycine betaine + NADH + 2 H(+)</text>
        <dbReference type="Rhea" id="RHEA:15305"/>
        <dbReference type="ChEBI" id="CHEBI:15377"/>
        <dbReference type="ChEBI" id="CHEBI:15378"/>
        <dbReference type="ChEBI" id="CHEBI:15710"/>
        <dbReference type="ChEBI" id="CHEBI:17750"/>
        <dbReference type="ChEBI" id="CHEBI:57540"/>
        <dbReference type="ChEBI" id="CHEBI:57945"/>
        <dbReference type="EC" id="1.2.1.8"/>
    </reaction>
</comment>
<comment type="cofactor">
    <cofactor evidence="1">
        <name>FAD</name>
        <dbReference type="ChEBI" id="CHEBI:57692"/>
    </cofactor>
</comment>
<comment type="pathway">
    <text evidence="1">Amine and polyamine biosynthesis; betaine biosynthesis via choline pathway; betaine aldehyde from choline (cytochrome c reductase route): step 1/1.</text>
</comment>
<comment type="similarity">
    <text evidence="1">Belongs to the GMC oxidoreductase family.</text>
</comment>
<name>BETA_PSEE4</name>
<protein>
    <recommendedName>
        <fullName evidence="1">Oxygen-dependent choline dehydrogenase</fullName>
        <shortName evidence="1">CDH</shortName>
        <shortName evidence="1">CHD</shortName>
        <ecNumber evidence="1">1.1.99.1</ecNumber>
    </recommendedName>
    <alternativeName>
        <fullName evidence="1">Betaine aldehyde dehydrogenase</fullName>
        <shortName evidence="1">BADH</shortName>
        <ecNumber evidence="1">1.2.1.8</ecNumber>
    </alternativeName>
</protein>
<dbReference type="EC" id="1.1.99.1" evidence="1"/>
<dbReference type="EC" id="1.2.1.8" evidence="1"/>
<dbReference type="EMBL" id="CT573326">
    <property type="protein sequence ID" value="CAK13332.1"/>
    <property type="molecule type" value="Genomic_DNA"/>
</dbReference>
<dbReference type="RefSeq" id="WP_011531792.1">
    <property type="nucleotide sequence ID" value="NC_008027.1"/>
</dbReference>
<dbReference type="SMR" id="Q1IG70"/>
<dbReference type="STRING" id="384676.PSEEN0372"/>
<dbReference type="GeneID" id="32803713"/>
<dbReference type="KEGG" id="pen:PSEEN0372"/>
<dbReference type="eggNOG" id="COG2303">
    <property type="taxonomic scope" value="Bacteria"/>
</dbReference>
<dbReference type="HOGENOM" id="CLU_002865_7_1_6"/>
<dbReference type="OrthoDB" id="9785276at2"/>
<dbReference type="UniPathway" id="UPA00529">
    <property type="reaction ID" value="UER00385"/>
</dbReference>
<dbReference type="Proteomes" id="UP000000658">
    <property type="component" value="Chromosome"/>
</dbReference>
<dbReference type="GO" id="GO:0016020">
    <property type="term" value="C:membrane"/>
    <property type="evidence" value="ECO:0007669"/>
    <property type="project" value="TreeGrafter"/>
</dbReference>
<dbReference type="GO" id="GO:0008802">
    <property type="term" value="F:betaine-aldehyde dehydrogenase (NAD+) activity"/>
    <property type="evidence" value="ECO:0007669"/>
    <property type="project" value="UniProtKB-EC"/>
</dbReference>
<dbReference type="GO" id="GO:0008812">
    <property type="term" value="F:choline dehydrogenase activity"/>
    <property type="evidence" value="ECO:0007669"/>
    <property type="project" value="UniProtKB-UniRule"/>
</dbReference>
<dbReference type="GO" id="GO:0050660">
    <property type="term" value="F:flavin adenine dinucleotide binding"/>
    <property type="evidence" value="ECO:0007669"/>
    <property type="project" value="InterPro"/>
</dbReference>
<dbReference type="GO" id="GO:0019285">
    <property type="term" value="P:glycine betaine biosynthetic process from choline"/>
    <property type="evidence" value="ECO:0007669"/>
    <property type="project" value="UniProtKB-UniRule"/>
</dbReference>
<dbReference type="Gene3D" id="3.50.50.60">
    <property type="entry name" value="FAD/NAD(P)-binding domain"/>
    <property type="match status" value="1"/>
</dbReference>
<dbReference type="Gene3D" id="3.30.560.10">
    <property type="entry name" value="Glucose Oxidase, domain 3"/>
    <property type="match status" value="1"/>
</dbReference>
<dbReference type="HAMAP" id="MF_00750">
    <property type="entry name" value="Choline_dehydrogen"/>
    <property type="match status" value="1"/>
</dbReference>
<dbReference type="InterPro" id="IPR011533">
    <property type="entry name" value="BetA"/>
</dbReference>
<dbReference type="InterPro" id="IPR036188">
    <property type="entry name" value="FAD/NAD-bd_sf"/>
</dbReference>
<dbReference type="InterPro" id="IPR012132">
    <property type="entry name" value="GMC_OxRdtase"/>
</dbReference>
<dbReference type="InterPro" id="IPR000172">
    <property type="entry name" value="GMC_OxRdtase_N"/>
</dbReference>
<dbReference type="InterPro" id="IPR007867">
    <property type="entry name" value="GMC_OxRtase_C"/>
</dbReference>
<dbReference type="NCBIfam" id="TIGR01810">
    <property type="entry name" value="betA"/>
    <property type="match status" value="1"/>
</dbReference>
<dbReference type="NCBIfam" id="NF002550">
    <property type="entry name" value="PRK02106.1"/>
    <property type="match status" value="1"/>
</dbReference>
<dbReference type="PANTHER" id="PTHR11552:SF147">
    <property type="entry name" value="CHOLINE DEHYDROGENASE, MITOCHONDRIAL"/>
    <property type="match status" value="1"/>
</dbReference>
<dbReference type="PANTHER" id="PTHR11552">
    <property type="entry name" value="GLUCOSE-METHANOL-CHOLINE GMC OXIDOREDUCTASE"/>
    <property type="match status" value="1"/>
</dbReference>
<dbReference type="Pfam" id="PF05199">
    <property type="entry name" value="GMC_oxred_C"/>
    <property type="match status" value="1"/>
</dbReference>
<dbReference type="Pfam" id="PF00732">
    <property type="entry name" value="GMC_oxred_N"/>
    <property type="match status" value="1"/>
</dbReference>
<dbReference type="PIRSF" id="PIRSF000137">
    <property type="entry name" value="Alcohol_oxidase"/>
    <property type="match status" value="1"/>
</dbReference>
<dbReference type="SUPFAM" id="SSF54373">
    <property type="entry name" value="FAD-linked reductases, C-terminal domain"/>
    <property type="match status" value="1"/>
</dbReference>
<dbReference type="SUPFAM" id="SSF51905">
    <property type="entry name" value="FAD/NAD(P)-binding domain"/>
    <property type="match status" value="1"/>
</dbReference>
<dbReference type="PROSITE" id="PS00623">
    <property type="entry name" value="GMC_OXRED_1"/>
    <property type="match status" value="1"/>
</dbReference>
<dbReference type="PROSITE" id="PS00624">
    <property type="entry name" value="GMC_OXRED_2"/>
    <property type="match status" value="1"/>
</dbReference>
<feature type="chain" id="PRO_1000046568" description="Oxygen-dependent choline dehydrogenase">
    <location>
        <begin position="1"/>
        <end position="565"/>
    </location>
</feature>
<feature type="region of interest" description="Disordered" evidence="2">
    <location>
        <begin position="182"/>
        <end position="203"/>
    </location>
</feature>
<feature type="active site" description="Proton acceptor" evidence="1">
    <location>
        <position position="475"/>
    </location>
</feature>
<feature type="binding site" evidence="1">
    <location>
        <begin position="6"/>
        <end position="35"/>
    </location>
    <ligand>
        <name>FAD</name>
        <dbReference type="ChEBI" id="CHEBI:57692"/>
    </ligand>
</feature>
<sequence>MSKEFDYIIVGAGSAGNTLATRLTEDASVSVLLLEAGGPDYRFDFRTQMPAALAFPLQGRRYNWAYETDPEPFMDGRRMECGRGKGLGGSSLINGMCYIRGNAMDFDGWAELPGLEDWTYLDCLPYFRKAETRDIGPNDYHGGEGPVSVATPKAGNNPLFHAMVEAGVQAGYPRTEDLNGYQQEGFGPMDRSVTKKGRRSSTARGYLDQAKKRPNLTIVTHALSDRVLFDGKRAVGVTYLVGDSEERVEARARKEVIVSSGAIASPQLLQRSGVGPRALLESLDIPVVHDLPGVGENLQDHLELYLQYACTQPVSLYPSLLWWNQPAIGAEWLFNGTGIGASNQFEAGGFIRTRPEFKWPNIQYHFLPVAINYNGSNGVKEHGFQAHMGSMRSPARGRIQAKSKDPRQHPSILFNYMSTEQDWQEFRDGIRLTREIMAQPALDAFRGREISPGAHVQTDEELDKFIREHAETAFHPSCSCKMGTDDMAVVDGEGRVHGMQGLRVVDASIMPLIITGNLNATTIMIAEKISDKIRGRKPLPRSTAKYYVAGDAPVKGKALREVKQA</sequence>
<keyword id="KW-0274">FAD</keyword>
<keyword id="KW-0285">Flavoprotein</keyword>
<keyword id="KW-0520">NAD</keyword>
<keyword id="KW-0560">Oxidoreductase</keyword>
<evidence type="ECO:0000255" key="1">
    <source>
        <dbReference type="HAMAP-Rule" id="MF_00750"/>
    </source>
</evidence>
<evidence type="ECO:0000256" key="2">
    <source>
        <dbReference type="SAM" id="MobiDB-lite"/>
    </source>
</evidence>
<gene>
    <name evidence="1" type="primary">betA</name>
    <name type="ordered locus">PSEEN0372</name>
</gene>
<accession>Q1IG70</accession>